<dbReference type="EC" id="7.1.1.9"/>
<dbReference type="EMBL" id="U18832">
    <property type="protein sequence ID" value="AAA75603.1"/>
    <property type="molecule type" value="Genomic_DNA"/>
</dbReference>
<dbReference type="PIR" id="I48070">
    <property type="entry name" value="I48070"/>
</dbReference>
<dbReference type="SMR" id="P50672"/>
<dbReference type="GO" id="GO:0005743">
    <property type="term" value="C:mitochondrial inner membrane"/>
    <property type="evidence" value="ECO:0007669"/>
    <property type="project" value="UniProtKB-SubCell"/>
</dbReference>
<dbReference type="GO" id="GO:0045277">
    <property type="term" value="C:respiratory chain complex IV"/>
    <property type="evidence" value="ECO:0000250"/>
    <property type="project" value="UniProtKB"/>
</dbReference>
<dbReference type="GO" id="GO:0005507">
    <property type="term" value="F:copper ion binding"/>
    <property type="evidence" value="ECO:0007669"/>
    <property type="project" value="InterPro"/>
</dbReference>
<dbReference type="GO" id="GO:0004129">
    <property type="term" value="F:cytochrome-c oxidase activity"/>
    <property type="evidence" value="ECO:0007669"/>
    <property type="project" value="UniProtKB-EC"/>
</dbReference>
<dbReference type="GO" id="GO:0042773">
    <property type="term" value="P:ATP synthesis coupled electron transport"/>
    <property type="evidence" value="ECO:0007669"/>
    <property type="project" value="TreeGrafter"/>
</dbReference>
<dbReference type="CDD" id="cd13912">
    <property type="entry name" value="CcO_II_C"/>
    <property type="match status" value="1"/>
</dbReference>
<dbReference type="FunFam" id="1.10.287.90:FF:000001">
    <property type="entry name" value="Cytochrome c oxidase subunit 2"/>
    <property type="match status" value="1"/>
</dbReference>
<dbReference type="FunFam" id="2.60.40.420:FF:000001">
    <property type="entry name" value="Cytochrome c oxidase subunit 2"/>
    <property type="match status" value="1"/>
</dbReference>
<dbReference type="Gene3D" id="1.10.287.90">
    <property type="match status" value="1"/>
</dbReference>
<dbReference type="Gene3D" id="2.60.40.420">
    <property type="entry name" value="Cupredoxins - blue copper proteins"/>
    <property type="match status" value="1"/>
</dbReference>
<dbReference type="InterPro" id="IPR045187">
    <property type="entry name" value="CcO_II"/>
</dbReference>
<dbReference type="InterPro" id="IPR002429">
    <property type="entry name" value="CcO_II-like_C"/>
</dbReference>
<dbReference type="InterPro" id="IPR034210">
    <property type="entry name" value="CcO_II_C"/>
</dbReference>
<dbReference type="InterPro" id="IPR001505">
    <property type="entry name" value="Copper_CuA"/>
</dbReference>
<dbReference type="InterPro" id="IPR008972">
    <property type="entry name" value="Cupredoxin"/>
</dbReference>
<dbReference type="InterPro" id="IPR014222">
    <property type="entry name" value="Cyt_c_oxidase_su2"/>
</dbReference>
<dbReference type="InterPro" id="IPR011759">
    <property type="entry name" value="Cyt_c_oxidase_su2_TM_dom"/>
</dbReference>
<dbReference type="InterPro" id="IPR036257">
    <property type="entry name" value="Cyt_c_oxidase_su2_TM_sf"/>
</dbReference>
<dbReference type="NCBIfam" id="TIGR02866">
    <property type="entry name" value="CoxB"/>
    <property type="match status" value="1"/>
</dbReference>
<dbReference type="PANTHER" id="PTHR22888:SF9">
    <property type="entry name" value="CYTOCHROME C OXIDASE SUBUNIT 2"/>
    <property type="match status" value="1"/>
</dbReference>
<dbReference type="PANTHER" id="PTHR22888">
    <property type="entry name" value="CYTOCHROME C OXIDASE, SUBUNIT II"/>
    <property type="match status" value="1"/>
</dbReference>
<dbReference type="Pfam" id="PF00116">
    <property type="entry name" value="COX2"/>
    <property type="match status" value="1"/>
</dbReference>
<dbReference type="Pfam" id="PF02790">
    <property type="entry name" value="COX2_TM"/>
    <property type="match status" value="1"/>
</dbReference>
<dbReference type="PRINTS" id="PR01166">
    <property type="entry name" value="CYCOXIDASEII"/>
</dbReference>
<dbReference type="SUPFAM" id="SSF49503">
    <property type="entry name" value="Cupredoxins"/>
    <property type="match status" value="1"/>
</dbReference>
<dbReference type="SUPFAM" id="SSF81464">
    <property type="entry name" value="Cytochrome c oxidase subunit II-like, transmembrane region"/>
    <property type="match status" value="1"/>
</dbReference>
<dbReference type="PROSITE" id="PS00078">
    <property type="entry name" value="COX2"/>
    <property type="match status" value="1"/>
</dbReference>
<dbReference type="PROSITE" id="PS50857">
    <property type="entry name" value="COX2_CUA"/>
    <property type="match status" value="1"/>
</dbReference>
<dbReference type="PROSITE" id="PS50999">
    <property type="entry name" value="COX2_TM"/>
    <property type="match status" value="1"/>
</dbReference>
<accession>P50672</accession>
<geneLocation type="mitochondrion"/>
<reference key="1">
    <citation type="journal article" date="1995" name="J. Mol. Evol.">
        <title>Mammalian mitochondrial DNA evolution: a comparison of the cytochrome b and cytochrome c oxidase II genes.</title>
        <authorList>
            <person name="Honeycutt R.L."/>
            <person name="Nedbal M.A."/>
            <person name="Adkins R.M."/>
            <person name="Janecek L.L."/>
        </authorList>
    </citation>
    <scope>NUCLEOTIDE SEQUENCE [GENOMIC DNA]</scope>
</reference>
<comment type="function">
    <text evidence="2">Component of the cytochrome c oxidase, the last enzyme in the mitochondrial electron transport chain which drives oxidative phosphorylation. The respiratory chain contains 3 multisubunit complexes succinate dehydrogenase (complex II, CII), ubiquinol-cytochrome c oxidoreductase (cytochrome b-c1 complex, complex III, CIII) and cytochrome c oxidase (complex IV, CIV), that cooperate to transfer electrons derived from NADH and succinate to molecular oxygen, creating an electrochemical gradient over the inner membrane that drives transmembrane transport and the ATP synthase. Cytochrome c oxidase is the component of the respiratory chain that catalyzes the reduction of oxygen to water. Electrons originating from reduced cytochrome c in the intermembrane space (IMS) are transferred via the dinuclear copper A center (CU(A)) of subunit 2 and heme A of subunit 1 to the active site in subunit 1, a binuclear center (BNC) formed by heme A3 and copper B (CU(B)). The BNC reduces molecular oxygen to 2 water molecules using 4 electrons from cytochrome c in the IMS and 4 protons from the mitochondrial matrix.</text>
</comment>
<comment type="catalytic activity">
    <reaction evidence="2">
        <text>4 Fe(II)-[cytochrome c] + O2 + 8 H(+)(in) = 4 Fe(III)-[cytochrome c] + 2 H2O + 4 H(+)(out)</text>
        <dbReference type="Rhea" id="RHEA:11436"/>
        <dbReference type="Rhea" id="RHEA-COMP:10350"/>
        <dbReference type="Rhea" id="RHEA-COMP:14399"/>
        <dbReference type="ChEBI" id="CHEBI:15377"/>
        <dbReference type="ChEBI" id="CHEBI:15378"/>
        <dbReference type="ChEBI" id="CHEBI:15379"/>
        <dbReference type="ChEBI" id="CHEBI:29033"/>
        <dbReference type="ChEBI" id="CHEBI:29034"/>
        <dbReference type="EC" id="7.1.1.9"/>
    </reaction>
    <physiologicalReaction direction="left-to-right" evidence="2">
        <dbReference type="Rhea" id="RHEA:11437"/>
    </physiologicalReaction>
</comment>
<comment type="cofactor">
    <cofactor evidence="3">
        <name>Cu cation</name>
        <dbReference type="ChEBI" id="CHEBI:23378"/>
    </cofactor>
    <text evidence="3">Binds a dinuclear copper A center per subunit.</text>
</comment>
<comment type="subunit">
    <text evidence="1 3">Component of the cytochrome c oxidase (complex IV, CIV), a multisubunit enzyme composed of 14 subunits. The complex is composed of a catalytic core of 3 subunits MT-CO1, MT-CO2 and MT-CO3, encoded in the mitochondrial DNA, and 11 supernumerary subunits COX4I, COX5A, COX5B, COX6A, COX6B, COX6C, COX7A, COX7B, COX7C, COX8 and NDUFA4, which are encoded in the nuclear genome. The complex exists as a monomer or a dimer and forms supercomplexes (SCs) in the inner mitochondrial membrane with NADH-ubiquinone oxidoreductase (complex I, CI) and ubiquinol-cytochrome c oxidoreductase (cytochrome b-c1 complex, complex III, CIII), resulting in different assemblies (supercomplex SCI(1)III(2)IV(1) and megacomplex MCI(2)III(2)IV(2)) (By similarity). Found in a complex with TMEM177, COA6, COX18, COX20, SCO1 and SCO2. Interacts with TMEM177 in a COX20-dependent manner. Interacts with COX20. Interacts with COX16 (By similarity).</text>
</comment>
<comment type="subcellular location">
    <subcellularLocation>
        <location evidence="3">Mitochondrion inner membrane</location>
        <topology evidence="3">Multi-pass membrane protein</topology>
    </subcellularLocation>
</comment>
<comment type="similarity">
    <text evidence="4">Belongs to the cytochrome c oxidase subunit 2 family.</text>
</comment>
<protein>
    <recommendedName>
        <fullName>Cytochrome c oxidase subunit 2</fullName>
        <ecNumber>7.1.1.9</ecNumber>
    </recommendedName>
    <alternativeName>
        <fullName>Cytochrome c oxidase polypeptide II</fullName>
    </alternativeName>
</protein>
<gene>
    <name type="primary">MT-CO2</name>
    <name type="synonym">COII</name>
    <name type="synonym">COXII</name>
    <name type="synonym">MTCO2</name>
</gene>
<keyword id="KW-0186">Copper</keyword>
<keyword id="KW-0249">Electron transport</keyword>
<keyword id="KW-0460">Magnesium</keyword>
<keyword id="KW-0472">Membrane</keyword>
<keyword id="KW-0479">Metal-binding</keyword>
<keyword id="KW-0496">Mitochondrion</keyword>
<keyword id="KW-0999">Mitochondrion inner membrane</keyword>
<keyword id="KW-0679">Respiratory chain</keyword>
<keyword id="KW-1278">Translocase</keyword>
<keyword id="KW-0812">Transmembrane</keyword>
<keyword id="KW-1133">Transmembrane helix</keyword>
<keyword id="KW-0813">Transport</keyword>
<organism>
    <name type="scientific">Acomys wilsoni</name>
    <name type="common">Wilson's spiny mouse</name>
    <dbReference type="NCBI Taxonomy" id="37436"/>
    <lineage>
        <taxon>Eukaryota</taxon>
        <taxon>Metazoa</taxon>
        <taxon>Chordata</taxon>
        <taxon>Craniata</taxon>
        <taxon>Vertebrata</taxon>
        <taxon>Euteleostomi</taxon>
        <taxon>Mammalia</taxon>
        <taxon>Eutheria</taxon>
        <taxon>Euarchontoglires</taxon>
        <taxon>Glires</taxon>
        <taxon>Rodentia</taxon>
        <taxon>Myomorpha</taxon>
        <taxon>Muroidea</taxon>
        <taxon>Muridae</taxon>
        <taxon>Deomyinae</taxon>
        <taxon>Acomys</taxon>
    </lineage>
</organism>
<name>COX2_ACOWI</name>
<feature type="chain" id="PRO_0000183484" description="Cytochrome c oxidase subunit 2">
    <location>
        <begin position="1"/>
        <end position="227"/>
    </location>
</feature>
<feature type="topological domain" description="Mitochondrial intermembrane" evidence="3">
    <location>
        <begin position="1"/>
        <end position="14"/>
    </location>
</feature>
<feature type="transmembrane region" description="Helical; Name=I" evidence="3">
    <location>
        <begin position="15"/>
        <end position="45"/>
    </location>
</feature>
<feature type="topological domain" description="Mitochondrial matrix" evidence="3">
    <location>
        <begin position="46"/>
        <end position="59"/>
    </location>
</feature>
<feature type="transmembrane region" description="Helical; Name=II" evidence="3">
    <location>
        <begin position="60"/>
        <end position="87"/>
    </location>
</feature>
<feature type="topological domain" description="Mitochondrial intermembrane" evidence="3">
    <location>
        <begin position="88"/>
        <end position="227"/>
    </location>
</feature>
<feature type="binding site" evidence="3">
    <location>
        <position position="161"/>
    </location>
    <ligand>
        <name>Cu cation</name>
        <dbReference type="ChEBI" id="CHEBI:23378"/>
        <label>A1</label>
    </ligand>
</feature>
<feature type="binding site" evidence="3">
    <location>
        <position position="196"/>
    </location>
    <ligand>
        <name>Cu cation</name>
        <dbReference type="ChEBI" id="CHEBI:23378"/>
        <label>A1</label>
    </ligand>
</feature>
<feature type="binding site" evidence="3">
    <location>
        <position position="196"/>
    </location>
    <ligand>
        <name>Cu cation</name>
        <dbReference type="ChEBI" id="CHEBI:23378"/>
        <label>A2</label>
    </ligand>
</feature>
<feature type="binding site" evidence="3">
    <location>
        <position position="198"/>
    </location>
    <ligand>
        <name>Cu cation</name>
        <dbReference type="ChEBI" id="CHEBI:23378"/>
        <label>A2</label>
    </ligand>
</feature>
<feature type="binding site" evidence="3">
    <location>
        <position position="198"/>
    </location>
    <ligand>
        <name>Mg(2+)</name>
        <dbReference type="ChEBI" id="CHEBI:18420"/>
        <note>ligand shared with MT-CO1</note>
    </ligand>
</feature>
<feature type="binding site" evidence="3">
    <location>
        <position position="200"/>
    </location>
    <ligand>
        <name>Cu cation</name>
        <dbReference type="ChEBI" id="CHEBI:23378"/>
        <label>A1</label>
    </ligand>
</feature>
<feature type="binding site" evidence="3">
    <location>
        <position position="200"/>
    </location>
    <ligand>
        <name>Cu cation</name>
        <dbReference type="ChEBI" id="CHEBI:23378"/>
        <label>A2</label>
    </ligand>
</feature>
<feature type="binding site" evidence="3">
    <location>
        <position position="204"/>
    </location>
    <ligand>
        <name>Cu cation</name>
        <dbReference type="ChEBI" id="CHEBI:23378"/>
        <label>A2</label>
    </ligand>
</feature>
<feature type="binding site" evidence="3">
    <location>
        <position position="207"/>
    </location>
    <ligand>
        <name>Cu cation</name>
        <dbReference type="ChEBI" id="CHEBI:23378"/>
        <label>A1</label>
    </ligand>
</feature>
<evidence type="ECO:0000250" key="1">
    <source>
        <dbReference type="UniProtKB" id="P00403"/>
    </source>
</evidence>
<evidence type="ECO:0000250" key="2">
    <source>
        <dbReference type="UniProtKB" id="P00410"/>
    </source>
</evidence>
<evidence type="ECO:0000250" key="3">
    <source>
        <dbReference type="UniProtKB" id="P68530"/>
    </source>
</evidence>
<evidence type="ECO:0000305" key="4"/>
<proteinExistence type="inferred from homology"/>
<sequence length="227" mass="25822">MAYPFQLGLQDATSPIMEELTNFHDHTLMIVFLISSLVLYIISSMLATKMTHTSTMDAQSMETIWTILPAVILVLIALPSLRILYMMDEINNPVLTVKTMGHQWYWSYEYTDYEDLCFDSYMVPTNDLKPGELRLLEVDNRVVLPMELPIRMLISSEDVLHSWAVPSLGLKTDAIPGRLNQATVSSNRPGLFYGQCSEICGSNHSFMPIVLEMVPLKFFENWSASMI</sequence>